<sequence>MTSHSTSAQCSASDSACRISSEQISQVRPKLQLLKILHAAGAQGEVFTMKEVMHYLGQYIMVKQLYDQQEQHMVYCGGDLLGDLLGCQSFSVKDPSPLYDMLRKNLVTSASINTDAAQTLALAQDHTMDFPSQDRLKHGATEYSNPRKRTEEEDTHTLPTSRHKCRDSRADEDLIEHLSQDETSRLDLDFEEWDVAGLPWWFLGNLRNNCIPKSNGSTDLQTNQDIGTAIVSDTTDDLWFLNETVSEQLGVGIKVEAANSEQTSEVGKTSNKKTVEVGKDDDLEDSRSLSDDTDVELTSEDEWQCTECKKFNSPSKRYCFRCWALRKDWYSDCSKLTHSLSTSNITAIPEKKDNEGIDVPDCRRTISAPVVRPKDGYLKEEKPRFDPCNSVGFLDLAHSSESQEIISSAREQTDIFSEQKAETESMEDFQNVLKPCSLCEKRPRDGNIIHGKTSHLTTCFHCARRLKKSGASCPACKKEIQLVIKVFIA</sequence>
<evidence type="ECO:0000250" key="1"/>
<evidence type="ECO:0000250" key="2">
    <source>
        <dbReference type="UniProtKB" id="O15151"/>
    </source>
</evidence>
<evidence type="ECO:0000250" key="3">
    <source>
        <dbReference type="UniProtKB" id="Q5XIN1"/>
    </source>
</evidence>
<evidence type="ECO:0000255" key="4"/>
<evidence type="ECO:0000255" key="5">
    <source>
        <dbReference type="PROSITE-ProRule" id="PRU00175"/>
    </source>
</evidence>
<evidence type="ECO:0000255" key="6">
    <source>
        <dbReference type="PROSITE-ProRule" id="PRU00322"/>
    </source>
</evidence>
<evidence type="ECO:0000255" key="7">
    <source>
        <dbReference type="PROSITE-ProRule" id="PRU01273"/>
    </source>
</evidence>
<evidence type="ECO:0000256" key="8">
    <source>
        <dbReference type="SAM" id="MobiDB-lite"/>
    </source>
</evidence>
<evidence type="ECO:0000303" key="9">
    <source>
    </source>
</evidence>
<evidence type="ECO:0000305" key="10"/>
<dbReference type="EMBL" id="AF007110">
    <property type="protein sequence ID" value="AAB62927.1"/>
    <property type="molecule type" value="mRNA"/>
</dbReference>
<dbReference type="EMBL" id="EU568360">
    <property type="protein sequence ID" value="ACB69756.1"/>
    <property type="molecule type" value="mRNA"/>
</dbReference>
<dbReference type="EMBL" id="AK017719">
    <property type="protein sequence ID" value="BAB30893.1"/>
    <property type="molecule type" value="mRNA"/>
</dbReference>
<dbReference type="EMBL" id="AK083349">
    <property type="protein sequence ID" value="BAC38879.1"/>
    <property type="molecule type" value="mRNA"/>
</dbReference>
<dbReference type="EMBL" id="CH466520">
    <property type="protein sequence ID" value="EDL39660.1"/>
    <property type="molecule type" value="Genomic_DNA"/>
</dbReference>
<dbReference type="EMBL" id="CH466520">
    <property type="protein sequence ID" value="EDL39662.1"/>
    <property type="molecule type" value="Genomic_DNA"/>
</dbReference>
<dbReference type="CCDS" id="CCDS15290.1">
    <molecule id="O35618-1"/>
</dbReference>
<dbReference type="PIR" id="S71955">
    <property type="entry name" value="S71955"/>
</dbReference>
<dbReference type="RefSeq" id="NP_001289730.1">
    <property type="nucleotide sequence ID" value="NM_001302801.1"/>
</dbReference>
<dbReference type="RefSeq" id="NP_001289731.1">
    <property type="nucleotide sequence ID" value="NM_001302802.1"/>
</dbReference>
<dbReference type="RefSeq" id="NP_001289732.1">
    <molecule id="O35618-1"/>
    <property type="nucleotide sequence ID" value="NM_001302803.1"/>
</dbReference>
<dbReference type="RefSeq" id="NP_001289733.1">
    <property type="nucleotide sequence ID" value="NM_001302804.1"/>
</dbReference>
<dbReference type="RefSeq" id="NP_032601.2">
    <molecule id="O35618-1"/>
    <property type="nucleotide sequence ID" value="NM_008575.4"/>
</dbReference>
<dbReference type="SMR" id="O35618"/>
<dbReference type="BioGRID" id="201373">
    <property type="interactions" value="12"/>
</dbReference>
<dbReference type="DIP" id="DIP-24201N"/>
<dbReference type="FunCoup" id="O35618">
    <property type="interactions" value="2211"/>
</dbReference>
<dbReference type="IntAct" id="O35618">
    <property type="interactions" value="5"/>
</dbReference>
<dbReference type="STRING" id="10090.ENSMUSP00000068661"/>
<dbReference type="iPTMnet" id="O35618"/>
<dbReference type="PhosphoSitePlus" id="O35618"/>
<dbReference type="jPOST" id="O35618"/>
<dbReference type="PaxDb" id="10090-ENSMUSP00000068661"/>
<dbReference type="ProteomicsDB" id="295986">
    <molecule id="O35618-1"/>
</dbReference>
<dbReference type="ProteomicsDB" id="295987">
    <molecule id="O35618-2"/>
</dbReference>
<dbReference type="Pumba" id="O35618"/>
<dbReference type="Antibodypedia" id="20673">
    <property type="antibodies" value="774 antibodies from 38 providers"/>
</dbReference>
<dbReference type="DNASU" id="17248"/>
<dbReference type="Ensembl" id="ENSMUST00000067429.10">
    <molecule id="O35618-1"/>
    <property type="protein sequence ID" value="ENSMUSP00000070411.4"/>
    <property type="gene ID" value="ENSMUSG00000054387.14"/>
</dbReference>
<dbReference type="Ensembl" id="ENSMUST00000188090.7">
    <molecule id="O35618-1"/>
    <property type="protein sequence ID" value="ENSMUSP00000140609.2"/>
    <property type="gene ID" value="ENSMUSG00000054387.14"/>
</dbReference>
<dbReference type="GeneID" id="17248"/>
<dbReference type="KEGG" id="mmu:17248"/>
<dbReference type="UCSC" id="uc007cpk.2">
    <molecule id="O35618-1"/>
    <property type="organism name" value="mouse"/>
</dbReference>
<dbReference type="AGR" id="MGI:107934"/>
<dbReference type="CTD" id="4194"/>
<dbReference type="MGI" id="MGI:107934">
    <property type="gene designation" value="Mdm4"/>
</dbReference>
<dbReference type="VEuPathDB" id="HostDB:ENSMUSG00000054387"/>
<dbReference type="eggNOG" id="ENOG502QQNV">
    <property type="taxonomic scope" value="Eukaryota"/>
</dbReference>
<dbReference type="GeneTree" id="ENSGT00530000063539"/>
<dbReference type="HOGENOM" id="CLU_043544_2_0_1"/>
<dbReference type="InParanoid" id="O35618"/>
<dbReference type="OrthoDB" id="24526at2759"/>
<dbReference type="Reactome" id="R-MMU-2559580">
    <property type="pathway name" value="Oxidative Stress Induced Senescence"/>
</dbReference>
<dbReference type="Reactome" id="R-MMU-2559585">
    <property type="pathway name" value="Oncogene Induced Senescence"/>
</dbReference>
<dbReference type="Reactome" id="R-MMU-5689880">
    <property type="pathway name" value="Ub-specific processing proteases"/>
</dbReference>
<dbReference type="Reactome" id="R-MMU-6804756">
    <property type="pathway name" value="Regulation of TP53 Activity through Phosphorylation"/>
</dbReference>
<dbReference type="Reactome" id="R-MMU-6804757">
    <property type="pathway name" value="Regulation of TP53 Degradation"/>
</dbReference>
<dbReference type="Reactome" id="R-MMU-6804760">
    <property type="pathway name" value="Regulation of TP53 Activity through Methylation"/>
</dbReference>
<dbReference type="Reactome" id="R-MMU-69541">
    <property type="pathway name" value="Stabilization of p53"/>
</dbReference>
<dbReference type="BioGRID-ORCS" id="17248">
    <property type="hits" value="9 hits in 81 CRISPR screens"/>
</dbReference>
<dbReference type="ChiTaRS" id="Mdm4">
    <property type="organism name" value="mouse"/>
</dbReference>
<dbReference type="PRO" id="PR:O35618"/>
<dbReference type="Proteomes" id="UP000000589">
    <property type="component" value="Chromosome 1"/>
</dbReference>
<dbReference type="RNAct" id="O35618">
    <property type="molecule type" value="protein"/>
</dbReference>
<dbReference type="Bgee" id="ENSMUSG00000054387">
    <property type="expression patterns" value="Expressed in secondary oocyte and 246 other cell types or tissues"/>
</dbReference>
<dbReference type="ExpressionAtlas" id="O35618">
    <property type="expression patterns" value="baseline and differential"/>
</dbReference>
<dbReference type="GO" id="GO:0005634">
    <property type="term" value="C:nucleus"/>
    <property type="evidence" value="ECO:0007669"/>
    <property type="project" value="UniProtKB-SubCell"/>
</dbReference>
<dbReference type="GO" id="GO:0008270">
    <property type="term" value="F:zinc ion binding"/>
    <property type="evidence" value="ECO:0007669"/>
    <property type="project" value="UniProtKB-KW"/>
</dbReference>
<dbReference type="GO" id="GO:0003283">
    <property type="term" value="P:atrial septum development"/>
    <property type="evidence" value="ECO:0000316"/>
    <property type="project" value="MGI"/>
</dbReference>
<dbReference type="GO" id="GO:0003181">
    <property type="term" value="P:atrioventricular valve morphogenesis"/>
    <property type="evidence" value="ECO:0000316"/>
    <property type="project" value="MGI"/>
</dbReference>
<dbReference type="GO" id="GO:0030330">
    <property type="term" value="P:DNA damage response, signal transduction by p53 class mediator"/>
    <property type="evidence" value="ECO:0000250"/>
    <property type="project" value="UniProtKB"/>
</dbReference>
<dbReference type="GO" id="GO:0003203">
    <property type="term" value="P:endocardial cushion morphogenesis"/>
    <property type="evidence" value="ECO:0000316"/>
    <property type="project" value="MGI"/>
</dbReference>
<dbReference type="GO" id="GO:0003170">
    <property type="term" value="P:heart valve development"/>
    <property type="evidence" value="ECO:0000316"/>
    <property type="project" value="MGI"/>
</dbReference>
<dbReference type="GO" id="GO:1902254">
    <property type="term" value="P:negative regulation of intrinsic apoptotic signaling pathway by p53 class mediator"/>
    <property type="evidence" value="ECO:0000315"/>
    <property type="project" value="UniProtKB"/>
</dbReference>
<dbReference type="GO" id="GO:0042177">
    <property type="term" value="P:negative regulation of protein catabolic process"/>
    <property type="evidence" value="ECO:0000250"/>
    <property type="project" value="UniProtKB"/>
</dbReference>
<dbReference type="GO" id="GO:0000122">
    <property type="term" value="P:negative regulation of transcription by RNA polymerase II"/>
    <property type="evidence" value="ECO:0000250"/>
    <property type="project" value="UniProtKB"/>
</dbReference>
<dbReference type="GO" id="GO:0008284">
    <property type="term" value="P:positive regulation of cell population proliferation"/>
    <property type="evidence" value="ECO:0000315"/>
    <property type="project" value="MGI"/>
</dbReference>
<dbReference type="GO" id="GO:0051726">
    <property type="term" value="P:regulation of cell cycle"/>
    <property type="evidence" value="ECO:0007669"/>
    <property type="project" value="InterPro"/>
</dbReference>
<dbReference type="GO" id="GO:0002027">
    <property type="term" value="P:regulation of heart rate"/>
    <property type="evidence" value="ECO:0000316"/>
    <property type="project" value="MGI"/>
</dbReference>
<dbReference type="GO" id="GO:0003281">
    <property type="term" value="P:ventricular septum development"/>
    <property type="evidence" value="ECO:0000316"/>
    <property type="project" value="MGI"/>
</dbReference>
<dbReference type="CDD" id="cd17673">
    <property type="entry name" value="MDM4"/>
    <property type="match status" value="1"/>
</dbReference>
<dbReference type="CDD" id="cd16784">
    <property type="entry name" value="mRING-HC-C2H2C4_MDM4"/>
    <property type="match status" value="1"/>
</dbReference>
<dbReference type="FunFam" id="1.10.245.10:FF:000002">
    <property type="entry name" value="E3 ubiquitin-protein ligase Mdm2"/>
    <property type="match status" value="1"/>
</dbReference>
<dbReference type="FunFam" id="2.30.30.380:FF:000010">
    <property type="entry name" value="MDM4 isoform 3"/>
    <property type="match status" value="1"/>
</dbReference>
<dbReference type="Gene3D" id="1.10.245.10">
    <property type="entry name" value="SWIB/MDM2 domain"/>
    <property type="match status" value="1"/>
</dbReference>
<dbReference type="Gene3D" id="3.30.40.10">
    <property type="entry name" value="Zinc/RING finger domain, C3HC4 (zinc finger)"/>
    <property type="match status" value="1"/>
</dbReference>
<dbReference type="Gene3D" id="2.30.30.380">
    <property type="entry name" value="Zn-finger domain of Sec23/24"/>
    <property type="match status" value="1"/>
</dbReference>
<dbReference type="InterPro" id="IPR015458">
    <property type="entry name" value="MDM4"/>
</dbReference>
<dbReference type="InterPro" id="IPR016495">
    <property type="entry name" value="p53_neg-reg_MDM_2/4"/>
</dbReference>
<dbReference type="InterPro" id="IPR036885">
    <property type="entry name" value="SWIB_MDM2_dom_sf"/>
</dbReference>
<dbReference type="InterPro" id="IPR003121">
    <property type="entry name" value="SWIB_MDM2_domain"/>
</dbReference>
<dbReference type="InterPro" id="IPR001876">
    <property type="entry name" value="Znf_RanBP2"/>
</dbReference>
<dbReference type="InterPro" id="IPR036443">
    <property type="entry name" value="Znf_RanBP2_sf"/>
</dbReference>
<dbReference type="InterPro" id="IPR001841">
    <property type="entry name" value="Znf_RING"/>
</dbReference>
<dbReference type="InterPro" id="IPR013083">
    <property type="entry name" value="Znf_RING/FYVE/PHD"/>
</dbReference>
<dbReference type="PANTHER" id="PTHR46858">
    <property type="entry name" value="OS05G0521000 PROTEIN"/>
    <property type="match status" value="1"/>
</dbReference>
<dbReference type="PANTHER" id="PTHR46858:SF12">
    <property type="entry name" value="PROTEIN MDM4"/>
    <property type="match status" value="1"/>
</dbReference>
<dbReference type="Pfam" id="PF02201">
    <property type="entry name" value="SWIB"/>
    <property type="match status" value="1"/>
</dbReference>
<dbReference type="Pfam" id="PF13920">
    <property type="entry name" value="zf-C3HC4_3"/>
    <property type="match status" value="1"/>
</dbReference>
<dbReference type="Pfam" id="PF00641">
    <property type="entry name" value="Zn_ribbon_RanBP"/>
    <property type="match status" value="1"/>
</dbReference>
<dbReference type="PIRSF" id="PIRSF500699">
    <property type="entry name" value="MDM4"/>
    <property type="match status" value="1"/>
</dbReference>
<dbReference type="PIRSF" id="PIRSF006748">
    <property type="entry name" value="p53_MDM_2/4"/>
    <property type="match status" value="1"/>
</dbReference>
<dbReference type="SUPFAM" id="SSF90209">
    <property type="entry name" value="Ran binding protein zinc finger-like"/>
    <property type="match status" value="1"/>
</dbReference>
<dbReference type="SUPFAM" id="SSF47592">
    <property type="entry name" value="SWIB/MDM2 domain"/>
    <property type="match status" value="1"/>
</dbReference>
<dbReference type="PROSITE" id="PS51925">
    <property type="entry name" value="SWIB_MDM2"/>
    <property type="match status" value="1"/>
</dbReference>
<dbReference type="PROSITE" id="PS01358">
    <property type="entry name" value="ZF_RANBP2_1"/>
    <property type="match status" value="1"/>
</dbReference>
<dbReference type="PROSITE" id="PS50199">
    <property type="entry name" value="ZF_RANBP2_2"/>
    <property type="match status" value="1"/>
</dbReference>
<dbReference type="PROSITE" id="PS50089">
    <property type="entry name" value="ZF_RING_2"/>
    <property type="match status" value="1"/>
</dbReference>
<accession>O35618</accession>
<accession>Q9CYG1</accession>
<keyword id="KW-0025">Alternative splicing</keyword>
<keyword id="KW-0479">Metal-binding</keyword>
<keyword id="KW-0539">Nucleus</keyword>
<keyword id="KW-0597">Phosphoprotein</keyword>
<keyword id="KW-1185">Reference proteome</keyword>
<keyword id="KW-0832">Ubl conjugation</keyword>
<keyword id="KW-0862">Zinc</keyword>
<keyword id="KW-0863">Zinc-finger</keyword>
<protein>
    <recommendedName>
        <fullName>Protein Mdm4</fullName>
    </recommendedName>
    <alternativeName>
        <fullName>Double minute 4 protein</fullName>
    </alternativeName>
    <alternativeName>
        <fullName>Mdm2-like p53-binding protein</fullName>
    </alternativeName>
    <alternativeName>
        <fullName>Protein Mdmx</fullName>
    </alternativeName>
    <alternativeName>
        <fullName>p53-binding protein Mdm4</fullName>
    </alternativeName>
</protein>
<organism>
    <name type="scientific">Mus musculus</name>
    <name type="common">Mouse</name>
    <dbReference type="NCBI Taxonomy" id="10090"/>
    <lineage>
        <taxon>Eukaryota</taxon>
        <taxon>Metazoa</taxon>
        <taxon>Chordata</taxon>
        <taxon>Craniata</taxon>
        <taxon>Vertebrata</taxon>
        <taxon>Euteleostomi</taxon>
        <taxon>Mammalia</taxon>
        <taxon>Eutheria</taxon>
        <taxon>Euarchontoglires</taxon>
        <taxon>Glires</taxon>
        <taxon>Rodentia</taxon>
        <taxon>Myomorpha</taxon>
        <taxon>Muroidea</taxon>
        <taxon>Muridae</taxon>
        <taxon>Murinae</taxon>
        <taxon>Mus</taxon>
        <taxon>Mus</taxon>
    </lineage>
</organism>
<comment type="function">
    <text>Inhibits p53/TP53- and TP73/p73-mediated cell cycle arrest and apoptosis by binding its transcriptional activation domain. Inhibits degradation of MDM2. Can reverse MDM2-targeted degradation of TP53 while maintaining suppression of TP53 transactivation and apoptotic functions. The short isoform is a more potent inhibitor of TP53 activity than the long isoform.</text>
</comment>
<comment type="subunit">
    <text evidence="1">Found in a trimeric complex with USP2, MDM2 and MDM4. Interacts with USP2. Interacts (phosphorylated) with YWHAG; negatively regulates MDM4 activity toward TP53 (By similarity). Interacts with MDM2, TP53 and TP73.</text>
</comment>
<comment type="interaction">
    <interactant intactId="EBI-2603376">
        <id>O35618</id>
    </interactant>
    <interactant intactId="EBI-3386476">
        <id>P23804-1</id>
        <label>Mdm2</label>
    </interactant>
    <organismsDiffer>false</organismsDiffer>
    <experiments>2</experiments>
</comment>
<comment type="interaction">
    <interactant intactId="EBI-2603376">
        <id>O35618</id>
    </interactant>
    <interactant intactId="EBI-3386480">
        <id>P23804-2</id>
        <label>Mdm2</label>
    </interactant>
    <organismsDiffer>false</organismsDiffer>
    <experiments>2</experiments>
</comment>
<comment type="interaction">
    <interactant intactId="EBI-2603376">
        <id>O35618</id>
    </interactant>
    <interactant intactId="EBI-302474">
        <id>Q93009</id>
        <label>USP7</label>
    </interactant>
    <organismsDiffer>true</organismsDiffer>
    <experiments>4</experiments>
</comment>
<comment type="subcellular location">
    <subcellularLocation>
        <location>Nucleus</location>
    </subcellularLocation>
</comment>
<comment type="alternative products">
    <event type="alternative splicing"/>
    <isoform>
        <id>O35618-1</id>
        <name>Long</name>
        <sequence type="displayed"/>
    </isoform>
    <isoform>
        <id>O35618-2</id>
        <name>Short</name>
        <name>MdmX-S</name>
        <sequence type="described" ref="VSP_003216 VSP_003217"/>
    </isoform>
</comment>
<comment type="tissue specificity">
    <text>In all tissues tested. The short isoform is expressed in a variety of transformed cell lines.</text>
</comment>
<comment type="domain">
    <text>Region I is sufficient for binding TP53 and inhibiting its G1 arrest and apoptosis functions. It also binds TP73. Region II contains most of a central acidic region and a putative C4-type zinc finger. The RING finger domain which coordinates two molecules of zinc mediates the heterooligomerization with MDM2.</text>
</comment>
<comment type="PTM">
    <text evidence="1">Phosphorylated. Phosphorylation at Ser-367 promotes interaction with YWHAG and subsequent ubiquitination and degradation. Phosphorylation at Ser-341 also induces ubiquitination and degradation but to a lower extent (By similarity).</text>
</comment>
<comment type="PTM">
    <text evidence="1">Ubiquitinated and degraded by MDM2. Deubiquitination by USP2 on the other hand stabilizes the MDM4 protein (By similarity).</text>
</comment>
<comment type="similarity">
    <text evidence="10">Belongs to the MDM2/MDM4 family.</text>
</comment>
<name>MDM4_MOUSE</name>
<reference key="1">
    <citation type="journal article" date="1996" name="EMBO J.">
        <title>MDMX: a novel p53-binding protein with some functional properties of MDM2.</title>
        <authorList>
            <person name="Shvarts A."/>
            <person name="Steegenga W.T."/>
            <person name="Riteco N."/>
            <person name="Van Laar T."/>
            <person name="Dekker P."/>
            <person name="Bazuine M."/>
            <person name="Van Ham R.C.A."/>
            <person name="Van der Houven van Oordt W."/>
            <person name="Hateboer G."/>
            <person name="Van der Eb A.J."/>
            <person name="Jochemsen A.G."/>
        </authorList>
    </citation>
    <scope>NUCLEOTIDE SEQUENCE [MRNA] (ISOFORM LONG)</scope>
    <source>
        <tissue>Embryo</tissue>
    </source>
</reference>
<reference key="2">
    <citation type="submission" date="1997-06" db="EMBL/GenBank/DDBJ databases">
        <authorList>
            <person name="Jochemsen A.G."/>
            <person name="Shvarts A."/>
            <person name="Steegenga W.T."/>
            <person name="Riteco N."/>
            <person name="Van Laar T."/>
            <person name="Dekker P."/>
            <person name="Bazuine M."/>
            <person name="Van Ham R.C.A."/>
            <person name="van Oordt W."/>
            <person name="Hateboer G."/>
            <person name="der Eb A.J."/>
        </authorList>
    </citation>
    <scope>NUCLEOTIDE SEQUENCE [MRNA] (ISOFORM LONG)</scope>
</reference>
<reference key="3">
    <citation type="journal article" date="1999" name="J. Biol. Chem.">
        <title>A novel MDMX transcript expressed in a variety of transformed cell lines encodes a truncated protein with potent p53 repressive activity.</title>
        <authorList>
            <person name="Rallapalli R."/>
            <person name="Strachan G."/>
            <person name="Cho B."/>
            <person name="Mercer W.E."/>
            <person name="Hall D.J."/>
        </authorList>
    </citation>
    <scope>NUCLEOTIDE SEQUENCE [MRNA] (ISOFORMS LONG AND SHORT)</scope>
</reference>
<reference key="4">
    <citation type="submission" date="2008-03" db="EMBL/GenBank/DDBJ databases">
        <authorList>
            <person name="Yang Y."/>
        </authorList>
    </citation>
    <scope>NUCLEOTIDE SEQUENCE [MRNA] (ISOFORM LONG)</scope>
</reference>
<reference key="5">
    <citation type="journal article" date="2005" name="Science">
        <title>The transcriptional landscape of the mammalian genome.</title>
        <authorList>
            <person name="Carninci P."/>
            <person name="Kasukawa T."/>
            <person name="Katayama S."/>
            <person name="Gough J."/>
            <person name="Frith M.C."/>
            <person name="Maeda N."/>
            <person name="Oyama R."/>
            <person name="Ravasi T."/>
            <person name="Lenhard B."/>
            <person name="Wells C."/>
            <person name="Kodzius R."/>
            <person name="Shimokawa K."/>
            <person name="Bajic V.B."/>
            <person name="Brenner S.E."/>
            <person name="Batalov S."/>
            <person name="Forrest A.R."/>
            <person name="Zavolan M."/>
            <person name="Davis M.J."/>
            <person name="Wilming L.G."/>
            <person name="Aidinis V."/>
            <person name="Allen J.E."/>
            <person name="Ambesi-Impiombato A."/>
            <person name="Apweiler R."/>
            <person name="Aturaliya R.N."/>
            <person name="Bailey T.L."/>
            <person name="Bansal M."/>
            <person name="Baxter L."/>
            <person name="Beisel K.W."/>
            <person name="Bersano T."/>
            <person name="Bono H."/>
            <person name="Chalk A.M."/>
            <person name="Chiu K.P."/>
            <person name="Choudhary V."/>
            <person name="Christoffels A."/>
            <person name="Clutterbuck D.R."/>
            <person name="Crowe M.L."/>
            <person name="Dalla E."/>
            <person name="Dalrymple B.P."/>
            <person name="de Bono B."/>
            <person name="Della Gatta G."/>
            <person name="di Bernardo D."/>
            <person name="Down T."/>
            <person name="Engstrom P."/>
            <person name="Fagiolini M."/>
            <person name="Faulkner G."/>
            <person name="Fletcher C.F."/>
            <person name="Fukushima T."/>
            <person name="Furuno M."/>
            <person name="Futaki S."/>
            <person name="Gariboldi M."/>
            <person name="Georgii-Hemming P."/>
            <person name="Gingeras T.R."/>
            <person name="Gojobori T."/>
            <person name="Green R.E."/>
            <person name="Gustincich S."/>
            <person name="Harbers M."/>
            <person name="Hayashi Y."/>
            <person name="Hensch T.K."/>
            <person name="Hirokawa N."/>
            <person name="Hill D."/>
            <person name="Huminiecki L."/>
            <person name="Iacono M."/>
            <person name="Ikeo K."/>
            <person name="Iwama A."/>
            <person name="Ishikawa T."/>
            <person name="Jakt M."/>
            <person name="Kanapin A."/>
            <person name="Katoh M."/>
            <person name="Kawasawa Y."/>
            <person name="Kelso J."/>
            <person name="Kitamura H."/>
            <person name="Kitano H."/>
            <person name="Kollias G."/>
            <person name="Krishnan S.P."/>
            <person name="Kruger A."/>
            <person name="Kummerfeld S.K."/>
            <person name="Kurochkin I.V."/>
            <person name="Lareau L.F."/>
            <person name="Lazarevic D."/>
            <person name="Lipovich L."/>
            <person name="Liu J."/>
            <person name="Liuni S."/>
            <person name="McWilliam S."/>
            <person name="Madan Babu M."/>
            <person name="Madera M."/>
            <person name="Marchionni L."/>
            <person name="Matsuda H."/>
            <person name="Matsuzawa S."/>
            <person name="Miki H."/>
            <person name="Mignone F."/>
            <person name="Miyake S."/>
            <person name="Morris K."/>
            <person name="Mottagui-Tabar S."/>
            <person name="Mulder N."/>
            <person name="Nakano N."/>
            <person name="Nakauchi H."/>
            <person name="Ng P."/>
            <person name="Nilsson R."/>
            <person name="Nishiguchi S."/>
            <person name="Nishikawa S."/>
            <person name="Nori F."/>
            <person name="Ohara O."/>
            <person name="Okazaki Y."/>
            <person name="Orlando V."/>
            <person name="Pang K.C."/>
            <person name="Pavan W.J."/>
            <person name="Pavesi G."/>
            <person name="Pesole G."/>
            <person name="Petrovsky N."/>
            <person name="Piazza S."/>
            <person name="Reed J."/>
            <person name="Reid J.F."/>
            <person name="Ring B.Z."/>
            <person name="Ringwald M."/>
            <person name="Rost B."/>
            <person name="Ruan Y."/>
            <person name="Salzberg S.L."/>
            <person name="Sandelin A."/>
            <person name="Schneider C."/>
            <person name="Schoenbach C."/>
            <person name="Sekiguchi K."/>
            <person name="Semple C.A."/>
            <person name="Seno S."/>
            <person name="Sessa L."/>
            <person name="Sheng Y."/>
            <person name="Shibata Y."/>
            <person name="Shimada H."/>
            <person name="Shimada K."/>
            <person name="Silva D."/>
            <person name="Sinclair B."/>
            <person name="Sperling S."/>
            <person name="Stupka E."/>
            <person name="Sugiura K."/>
            <person name="Sultana R."/>
            <person name="Takenaka Y."/>
            <person name="Taki K."/>
            <person name="Tammoja K."/>
            <person name="Tan S.L."/>
            <person name="Tang S."/>
            <person name="Taylor M.S."/>
            <person name="Tegner J."/>
            <person name="Teichmann S.A."/>
            <person name="Ueda H.R."/>
            <person name="van Nimwegen E."/>
            <person name="Verardo R."/>
            <person name="Wei C.L."/>
            <person name="Yagi K."/>
            <person name="Yamanishi H."/>
            <person name="Zabarovsky E."/>
            <person name="Zhu S."/>
            <person name="Zimmer A."/>
            <person name="Hide W."/>
            <person name="Bult C."/>
            <person name="Grimmond S.M."/>
            <person name="Teasdale R.D."/>
            <person name="Liu E.T."/>
            <person name="Brusic V."/>
            <person name="Quackenbush J."/>
            <person name="Wahlestedt C."/>
            <person name="Mattick J.S."/>
            <person name="Hume D.A."/>
            <person name="Kai C."/>
            <person name="Sasaki D."/>
            <person name="Tomaru Y."/>
            <person name="Fukuda S."/>
            <person name="Kanamori-Katayama M."/>
            <person name="Suzuki M."/>
            <person name="Aoki J."/>
            <person name="Arakawa T."/>
            <person name="Iida J."/>
            <person name="Imamura K."/>
            <person name="Itoh M."/>
            <person name="Kato T."/>
            <person name="Kawaji H."/>
            <person name="Kawagashira N."/>
            <person name="Kawashima T."/>
            <person name="Kojima M."/>
            <person name="Kondo S."/>
            <person name="Konno H."/>
            <person name="Nakano K."/>
            <person name="Ninomiya N."/>
            <person name="Nishio T."/>
            <person name="Okada M."/>
            <person name="Plessy C."/>
            <person name="Shibata K."/>
            <person name="Shiraki T."/>
            <person name="Suzuki S."/>
            <person name="Tagami M."/>
            <person name="Waki K."/>
            <person name="Watahiki A."/>
            <person name="Okamura-Oho Y."/>
            <person name="Suzuki H."/>
            <person name="Kawai J."/>
            <person name="Hayashizaki Y."/>
        </authorList>
    </citation>
    <scope>NUCLEOTIDE SEQUENCE [LARGE SCALE MRNA] (ISOFORM LONG)</scope>
    <source>
        <strain>C57BL/6J</strain>
        <tissue>Thymus</tissue>
    </source>
</reference>
<reference key="6">
    <citation type="submission" date="2005-09" db="EMBL/GenBank/DDBJ databases">
        <authorList>
            <person name="Mural R.J."/>
            <person name="Adams M.D."/>
            <person name="Myers E.W."/>
            <person name="Smith H.O."/>
            <person name="Venter J.C."/>
        </authorList>
    </citation>
    <scope>NUCLEOTIDE SEQUENCE [LARGE SCALE GENOMIC DNA]</scope>
</reference>
<feature type="chain" id="PRO_0000157337" description="Protein Mdm4">
    <location>
        <begin position="1"/>
        <end position="489"/>
    </location>
</feature>
<feature type="domain" description="SWIB/MDM2" evidence="7">
    <location>
        <begin position="25"/>
        <end position="108"/>
    </location>
</feature>
<feature type="zinc finger region" description="RanBP2-type" evidence="6">
    <location>
        <begin position="299"/>
        <end position="328"/>
    </location>
</feature>
<feature type="zinc finger region" description="RING-type" evidence="5">
    <location>
        <begin position="436"/>
        <end position="477"/>
    </location>
</feature>
<feature type="region of interest" description="Disordered" evidence="8">
    <location>
        <begin position="131"/>
        <end position="166"/>
    </location>
</feature>
<feature type="region of interest" description="Region II">
    <location>
        <begin position="246"/>
        <end position="331"/>
    </location>
</feature>
<feature type="region of interest" description="Necessary for interaction with USP2" evidence="1">
    <location>
        <begin position="392"/>
        <end position="489"/>
    </location>
</feature>
<feature type="short sequence motif" description="Nuclear localization signal" evidence="4">
    <location>
        <begin position="441"/>
        <end position="444"/>
    </location>
</feature>
<feature type="compositionally biased region" description="Basic and acidic residues" evidence="8">
    <location>
        <begin position="131"/>
        <end position="140"/>
    </location>
</feature>
<feature type="modified residue" description="Phosphoserine" evidence="3">
    <location>
        <position position="179"/>
    </location>
</feature>
<feature type="modified residue" description="Phosphoserine; by CHEK2" evidence="2">
    <location>
        <position position="341"/>
    </location>
</feature>
<feature type="modified residue" description="Phosphoserine; by CHEK1 and CHEK2" evidence="2">
    <location>
        <position position="367"/>
    </location>
</feature>
<feature type="splice variant" id="VSP_003216" description="In isoform Short." evidence="9">
    <original>DAAQTLALAQDHT</original>
    <variation>ARCNRILQSQKKN</variation>
    <location>
        <begin position="115"/>
        <end position="127"/>
    </location>
</feature>
<feature type="splice variant" id="VSP_003217" description="In isoform Short." evidence="9">
    <location>
        <begin position="128"/>
        <end position="489"/>
    </location>
</feature>
<feature type="sequence conflict" description="In Ref. 1; AAB62927." evidence="10" ref="1">
    <original>I</original>
    <variation>N</variation>
    <location>
        <position position="112"/>
    </location>
</feature>
<feature type="sequence conflict" description="In Ref. 1; AAB62927." evidence="10" ref="1">
    <original>A</original>
    <variation>V</variation>
    <location>
        <position position="475"/>
    </location>
</feature>
<gene>
    <name type="primary">Mdm4</name>
    <name type="synonym">Mdmx</name>
</gene>
<proteinExistence type="evidence at protein level"/>